<organism>
    <name type="scientific">Micrurus frontalis</name>
    <name type="common">Coral snake</name>
    <dbReference type="NCBI Taxonomy" id="129461"/>
    <lineage>
        <taxon>Eukaryota</taxon>
        <taxon>Metazoa</taxon>
        <taxon>Chordata</taxon>
        <taxon>Craniata</taxon>
        <taxon>Vertebrata</taxon>
        <taxon>Euteleostomi</taxon>
        <taxon>Lepidosauria</taxon>
        <taxon>Squamata</taxon>
        <taxon>Bifurcata</taxon>
        <taxon>Unidentata</taxon>
        <taxon>Episquamata</taxon>
        <taxon>Toxicofera</taxon>
        <taxon>Serpentes</taxon>
        <taxon>Colubroidea</taxon>
        <taxon>Elapidae</taxon>
        <taxon>Elapinae</taxon>
        <taxon>Micrurus</taxon>
    </lineage>
</organism>
<sequence>MTCKTCPFETCANSEYCPAGNDICYQKKWNDHREEMIERGCVANCPQMESHHTSLLCCRRDNCN</sequence>
<feature type="chain" id="PRO_0000394462" description="Frontoxin IV" evidence="2">
    <location>
        <begin position="1"/>
        <end position="64"/>
    </location>
</feature>
<feature type="disulfide bond" evidence="1">
    <location>
        <begin position="3"/>
        <end position="24"/>
    </location>
</feature>
<feature type="disulfide bond" evidence="1">
    <location>
        <begin position="6"/>
        <end position="11"/>
    </location>
</feature>
<feature type="disulfide bond" evidence="1">
    <location>
        <begin position="17"/>
        <end position="41"/>
    </location>
</feature>
<feature type="disulfide bond" evidence="1">
    <location>
        <begin position="45"/>
        <end position="57"/>
    </location>
</feature>
<feature type="disulfide bond" evidence="1">
    <location>
        <begin position="58"/>
        <end position="63"/>
    </location>
</feature>
<accession>P86423</accession>
<proteinExistence type="evidence at protein level"/>
<dbReference type="SMR" id="P86423"/>
<dbReference type="GO" id="GO:0005576">
    <property type="term" value="C:extracellular region"/>
    <property type="evidence" value="ECO:0007669"/>
    <property type="project" value="UniProtKB-SubCell"/>
</dbReference>
<dbReference type="GO" id="GO:0030550">
    <property type="term" value="F:acetylcholine receptor inhibitor activity"/>
    <property type="evidence" value="ECO:0007669"/>
    <property type="project" value="UniProtKB-KW"/>
</dbReference>
<dbReference type="GO" id="GO:0099106">
    <property type="term" value="F:ion channel regulator activity"/>
    <property type="evidence" value="ECO:0007669"/>
    <property type="project" value="UniProtKB-KW"/>
</dbReference>
<dbReference type="GO" id="GO:0090729">
    <property type="term" value="F:toxin activity"/>
    <property type="evidence" value="ECO:0007669"/>
    <property type="project" value="UniProtKB-KW"/>
</dbReference>
<dbReference type="CDD" id="cd00206">
    <property type="entry name" value="TFP_snake_toxin"/>
    <property type="match status" value="1"/>
</dbReference>
<dbReference type="FunFam" id="2.10.60.10:FF:000024">
    <property type="entry name" value="Cytotoxin 1"/>
    <property type="match status" value="1"/>
</dbReference>
<dbReference type="Gene3D" id="2.10.60.10">
    <property type="entry name" value="CD59"/>
    <property type="match status" value="1"/>
</dbReference>
<dbReference type="InterPro" id="IPR003571">
    <property type="entry name" value="Snake_3FTx"/>
</dbReference>
<dbReference type="InterPro" id="IPR045860">
    <property type="entry name" value="Snake_toxin-like_sf"/>
</dbReference>
<dbReference type="InterPro" id="IPR018354">
    <property type="entry name" value="Snake_toxin_con_site"/>
</dbReference>
<dbReference type="InterPro" id="IPR054131">
    <property type="entry name" value="Toxin_cobra-type"/>
</dbReference>
<dbReference type="Pfam" id="PF21947">
    <property type="entry name" value="Toxin_cobra-type"/>
    <property type="match status" value="1"/>
</dbReference>
<dbReference type="SUPFAM" id="SSF57302">
    <property type="entry name" value="Snake toxin-like"/>
    <property type="match status" value="1"/>
</dbReference>
<dbReference type="PROSITE" id="PS00272">
    <property type="entry name" value="SNAKE_TOXIN"/>
    <property type="match status" value="1"/>
</dbReference>
<reference key="1">
    <citation type="journal article" date="2010" name="Toxicon">
        <title>Frontoxins, three-finger toxins from Micrurus frontalis venom, decrease miniature endplate potential amplitude at frog neuromuscular junction.</title>
        <authorList>
            <person name="Moreira K.G."/>
            <person name="Prates M.V."/>
            <person name="Andrade F.A."/>
            <person name="Silva L.P."/>
            <person name="Beirao P.S."/>
            <person name="Kushmerick C."/>
            <person name="Naves L.A."/>
            <person name="Bloch C. Jr."/>
        </authorList>
    </citation>
    <scope>PROTEIN SEQUENCE</scope>
    <scope>FUNCTION</scope>
    <scope>SUBCELLULAR LOCATION</scope>
    <scope>MASS SPECTROMETRY</scope>
    <source>
        <tissue evidence="2">Venom</tissue>
    </source>
</reference>
<evidence type="ECO:0000250" key="1">
    <source>
        <dbReference type="UniProtKB" id="Q9YGJ0"/>
    </source>
</evidence>
<evidence type="ECO:0000269" key="2">
    <source>
    </source>
</evidence>
<evidence type="ECO:0000303" key="3">
    <source>
    </source>
</evidence>
<evidence type="ECO:0000305" key="4"/>
<comment type="function">
    <text evidence="2">Produces peripheral paralysis by blocking neuromuscular transmission at the postsynaptic site. Binds to the muscular nicotinic acetylcholine receptor (nAChR).</text>
</comment>
<comment type="subcellular location">
    <subcellularLocation>
        <location evidence="2">Secreted</location>
    </subcellularLocation>
</comment>
<comment type="tissue specificity">
    <text evidence="4">Expressed by the venom gland.</text>
</comment>
<comment type="mass spectrometry"/>
<comment type="similarity">
    <text evidence="4">Belongs to the three-finger toxin family. Ancestral subfamily.</text>
</comment>
<keyword id="KW-0008">Acetylcholine receptor inhibiting toxin</keyword>
<keyword id="KW-0903">Direct protein sequencing</keyword>
<keyword id="KW-1015">Disulfide bond</keyword>
<keyword id="KW-0872">Ion channel impairing toxin</keyword>
<keyword id="KW-0528">Neurotoxin</keyword>
<keyword id="KW-0629">Postsynaptic neurotoxin</keyword>
<keyword id="KW-0964">Secreted</keyword>
<keyword id="KW-0800">Toxin</keyword>
<name>3NX4_MICFR</name>
<protein>
    <recommendedName>
        <fullName evidence="3">Frontoxin IV</fullName>
        <shortName evidence="3">FTx IV</shortName>
    </recommendedName>
</protein>